<gene>
    <name type="ORF">PHYPADRAFT_111231</name>
</gene>
<accession>A9RBS1</accession>
<organism>
    <name type="scientific">Physcomitrium patens</name>
    <name type="common">Spreading-leaved earth moss</name>
    <name type="synonym">Physcomitrella patens</name>
    <dbReference type="NCBI Taxonomy" id="3218"/>
    <lineage>
        <taxon>Eukaryota</taxon>
        <taxon>Viridiplantae</taxon>
        <taxon>Streptophyta</taxon>
        <taxon>Embryophyta</taxon>
        <taxon>Bryophyta</taxon>
        <taxon>Bryophytina</taxon>
        <taxon>Bryopsida</taxon>
        <taxon>Funariidae</taxon>
        <taxon>Funariales</taxon>
        <taxon>Funariaceae</taxon>
        <taxon>Physcomitrium</taxon>
    </lineage>
</organism>
<reference key="1">
    <citation type="journal article" date="2008" name="Science">
        <title>The Physcomitrella genome reveals evolutionary insights into the conquest of land by plants.</title>
        <authorList>
            <person name="Rensing S.A."/>
            <person name="Lang D."/>
            <person name="Zimmer A.D."/>
            <person name="Terry A."/>
            <person name="Salamov A."/>
            <person name="Shapiro H."/>
            <person name="Nishiyama T."/>
            <person name="Perroud P.-F."/>
            <person name="Lindquist E.A."/>
            <person name="Kamisugi Y."/>
            <person name="Tanahashi T."/>
            <person name="Sakakibara K."/>
            <person name="Fujita T."/>
            <person name="Oishi K."/>
            <person name="Shin-I T."/>
            <person name="Kuroki Y."/>
            <person name="Toyoda A."/>
            <person name="Suzuki Y."/>
            <person name="Hashimoto S.-I."/>
            <person name="Yamaguchi K."/>
            <person name="Sugano S."/>
            <person name="Kohara Y."/>
            <person name="Fujiyama A."/>
            <person name="Anterola A."/>
            <person name="Aoki S."/>
            <person name="Ashton N."/>
            <person name="Barbazuk W.B."/>
            <person name="Barker E."/>
            <person name="Bennetzen J.L."/>
            <person name="Blankenship R."/>
            <person name="Cho S.H."/>
            <person name="Dutcher S.K."/>
            <person name="Estelle M."/>
            <person name="Fawcett J.A."/>
            <person name="Gundlach H."/>
            <person name="Hanada K."/>
            <person name="Heyl A."/>
            <person name="Hicks K.A."/>
            <person name="Hughes J."/>
            <person name="Lohr M."/>
            <person name="Mayer K."/>
            <person name="Melkozernov A."/>
            <person name="Murata T."/>
            <person name="Nelson D.R."/>
            <person name="Pils B."/>
            <person name="Prigge M."/>
            <person name="Reiss B."/>
            <person name="Renner T."/>
            <person name="Rombauts S."/>
            <person name="Rushton P.J."/>
            <person name="Sanderfoot A."/>
            <person name="Schween G."/>
            <person name="Shiu S.-H."/>
            <person name="Stueber K."/>
            <person name="Theodoulou F.L."/>
            <person name="Tu H."/>
            <person name="Van de Peer Y."/>
            <person name="Verrier P.J."/>
            <person name="Waters E."/>
            <person name="Wood A."/>
            <person name="Yang L."/>
            <person name="Cove D."/>
            <person name="Cuming A.C."/>
            <person name="Hasebe M."/>
            <person name="Lucas S."/>
            <person name="Mishler B.D."/>
            <person name="Reski R."/>
            <person name="Grigoriev I.V."/>
            <person name="Quatrano R.S."/>
            <person name="Boore J.L."/>
        </authorList>
    </citation>
    <scope>NUCLEOTIDE SEQUENCE [LARGE SCALE GENOMIC DNA]</scope>
    <source>
        <strain>cv. Gransden 2004</strain>
    </source>
</reference>
<sequence>MGLDKDGISNIAKERIASSLVEDTKDLAAELCKHFYNQGWVSGTGGSITLKVLESDVDVQERLIVMAPSGVQKERMLPVDMYVLSSDGTVLSAPPAKGAPHKPPKCSECCPLFLKAYKMRNAGAVIHSHGLESCLATMINPTAKEFRITHMEMIKGIAGHGYYDELVVPIIENSAREYELTDALAAAMEAYPKATAVLVRNHGIYIWGDSWISAKTQAECYHYLFNAALKLHQLGLDPADAKHGPLTRPQTLPDFANKRATSKNVFVLDIEGTTTPISFVTEVLFPYARENVSSFFKSTYNSPETLNDIRLLRDQVHEDLRNNVPGATEIPVESAGIDAVVAAIEKNVQAMIKADRKVTALKELQGHIWRIGYENGELKGSVFEDVPEALAKWDARGIKTYIYSSGSREAQKLIFGNTNFGDLRVYLSGFFDTTIGHKREARSYKEIFLTLGVDHPSCITFATDVLAEAVAAKEAGLQAVLLLRPGNAPLPSDHGFRTAKSLLEL</sequence>
<protein>
    <recommendedName>
        <fullName evidence="1">Probable bifunctional methylthioribulose-1-phosphate dehydratase/enolase-phosphatase E1</fullName>
    </recommendedName>
    <domain>
        <recommendedName>
            <fullName evidence="1">Methylthioribulose-1-phosphate dehydratase</fullName>
            <shortName evidence="1">MTRu-1-P dehydratase</shortName>
            <ecNumber evidence="1">4.2.1.109</ecNumber>
        </recommendedName>
    </domain>
    <domain>
        <recommendedName>
            <fullName evidence="1">Enolase-phosphatase E1</fullName>
            <ecNumber evidence="1">3.1.3.77</ecNumber>
        </recommendedName>
        <alternativeName>
            <fullName evidence="1">2,3-diketo-5-methylthio-1-phosphopentane phosphatase</fullName>
        </alternativeName>
    </domain>
</protein>
<feature type="chain" id="PRO_0000394159" description="Probable bifunctional methylthioribulose-1-phosphate dehydratase/enolase-phosphatase E1">
    <location>
        <begin position="1"/>
        <end position="505"/>
    </location>
</feature>
<feature type="region of interest" description="Methylthioribulose-1-phosphate dehydratase" evidence="1">
    <location>
        <begin position="1"/>
        <end position="237"/>
    </location>
</feature>
<feature type="region of interest" description="Enolase-phosphatase E1" evidence="1">
    <location>
        <begin position="266"/>
        <end position="505"/>
    </location>
</feature>
<feature type="active site" description="Proton donor/acceptor; for methylthioribulose-1-phosphate dehydratase activity" evidence="1">
    <location>
        <position position="152"/>
    </location>
</feature>
<feature type="binding site" evidence="1">
    <location>
        <position position="109"/>
    </location>
    <ligand>
        <name>substrate</name>
        <label>1</label>
        <note>for methylthioribulose-1-phosphate dehydratase activity</note>
    </ligand>
</feature>
<feature type="binding site" evidence="1">
    <location>
        <position position="127"/>
    </location>
    <ligand>
        <name>Zn(2+)</name>
        <dbReference type="ChEBI" id="CHEBI:29105"/>
    </ligand>
</feature>
<feature type="binding site" evidence="1">
    <location>
        <position position="129"/>
    </location>
    <ligand>
        <name>Zn(2+)</name>
        <dbReference type="ChEBI" id="CHEBI:29105"/>
    </ligand>
</feature>
<feature type="binding site" evidence="1">
    <location>
        <position position="202"/>
    </location>
    <ligand>
        <name>Zn(2+)</name>
        <dbReference type="ChEBI" id="CHEBI:29105"/>
    </ligand>
</feature>
<feature type="binding site" evidence="1">
    <location>
        <position position="269"/>
    </location>
    <ligand>
        <name>Mg(2+)</name>
        <dbReference type="ChEBI" id="CHEBI:18420"/>
    </ligand>
</feature>
<feature type="binding site" evidence="1">
    <location>
        <position position="271"/>
    </location>
    <ligand>
        <name>Mg(2+)</name>
        <dbReference type="ChEBI" id="CHEBI:18420"/>
    </ligand>
</feature>
<feature type="binding site" evidence="1">
    <location>
        <begin position="404"/>
        <end position="405"/>
    </location>
    <ligand>
        <name>substrate</name>
        <label>2</label>
        <note>for enolase-phosphatase activity</note>
    </ligand>
</feature>
<feature type="binding site" evidence="1">
    <location>
        <position position="438"/>
    </location>
    <ligand>
        <name>substrate</name>
        <label>2</label>
        <note>for enolase-phosphatase activity</note>
    </ligand>
</feature>
<feature type="binding site" evidence="1">
    <location>
        <position position="464"/>
    </location>
    <ligand>
        <name>Mg(2+)</name>
        <dbReference type="ChEBI" id="CHEBI:18420"/>
    </ligand>
</feature>
<comment type="catalytic activity">
    <reaction evidence="1">
        <text>5-(methylsulfanyl)-D-ribulose 1-phosphate = 5-methylsulfanyl-2,3-dioxopentyl phosphate + H2O</text>
        <dbReference type="Rhea" id="RHEA:15549"/>
        <dbReference type="ChEBI" id="CHEBI:15377"/>
        <dbReference type="ChEBI" id="CHEBI:58548"/>
        <dbReference type="ChEBI" id="CHEBI:58828"/>
        <dbReference type="EC" id="4.2.1.109"/>
    </reaction>
</comment>
<comment type="catalytic activity">
    <reaction evidence="1">
        <text>5-methylsulfanyl-2,3-dioxopentyl phosphate + H2O = 1,2-dihydroxy-5-(methylsulfanyl)pent-1-en-3-one + phosphate</text>
        <dbReference type="Rhea" id="RHEA:21700"/>
        <dbReference type="ChEBI" id="CHEBI:15377"/>
        <dbReference type="ChEBI" id="CHEBI:43474"/>
        <dbReference type="ChEBI" id="CHEBI:49252"/>
        <dbReference type="ChEBI" id="CHEBI:58828"/>
        <dbReference type="EC" id="3.1.3.77"/>
    </reaction>
</comment>
<comment type="cofactor">
    <cofactor evidence="1">
        <name>Zn(2+)</name>
        <dbReference type="ChEBI" id="CHEBI:29105"/>
    </cofactor>
    <text evidence="1">Binds 1 zinc ion per subunit.</text>
</comment>
<comment type="cofactor">
    <cofactor evidence="1">
        <name>Mg(2+)</name>
        <dbReference type="ChEBI" id="CHEBI:18420"/>
    </cofactor>
    <text evidence="1">Binds 1 Mg(2+) ion per subunit.</text>
</comment>
<comment type="pathway">
    <text evidence="1">Amino-acid biosynthesis; L-methionine biosynthesis via salvage pathway; L-methionine from S-methyl-5-thio-alpha-D-ribose 1-phosphate: step 2/6.</text>
</comment>
<comment type="pathway">
    <text evidence="1">Amino-acid biosynthesis; L-methionine biosynthesis via salvage pathway; L-methionine from S-methyl-5-thio-alpha-D-ribose 1-phosphate: step 3/6.</text>
</comment>
<comment type="pathway">
    <text evidence="1">Amino-acid biosynthesis; L-methionine biosynthesis via salvage pathway; L-methionine from S-methyl-5-thio-alpha-D-ribose 1-phosphate: step 4/6.</text>
</comment>
<comment type="similarity">
    <text evidence="1">In the N-terminal section; belongs to the aldolase class II family. MtnB subfamily.</text>
</comment>
<comment type="similarity">
    <text evidence="1">In the C-terminal section; belongs to the HAD-like hydrolase superfamily. MasA/MtnC family.</text>
</comment>
<evidence type="ECO:0000255" key="1">
    <source>
        <dbReference type="HAMAP-Rule" id="MF_03118"/>
    </source>
</evidence>
<dbReference type="EC" id="4.2.1.109" evidence="1"/>
<dbReference type="EC" id="3.1.3.77" evidence="1"/>
<dbReference type="EMBL" id="DS544890">
    <property type="protein sequence ID" value="EDQ83928.1"/>
    <property type="molecule type" value="Genomic_DNA"/>
</dbReference>
<dbReference type="RefSeq" id="XP_001751611.1">
    <property type="nucleotide sequence ID" value="XM_001751559.1"/>
</dbReference>
<dbReference type="SMR" id="A9RBS1"/>
<dbReference type="FunCoup" id="A9RBS1">
    <property type="interactions" value="1952"/>
</dbReference>
<dbReference type="PaxDb" id="3218-PP1S1_661V6.3"/>
<dbReference type="EnsemblPlants" id="Pp3c3_4430V3.1">
    <property type="protein sequence ID" value="Pp3c3_4430V3.1"/>
    <property type="gene ID" value="Pp3c3_4430"/>
</dbReference>
<dbReference type="EnsemblPlants" id="Pp3c3_4430V3.2">
    <property type="protein sequence ID" value="Pp3c3_4430V3.2"/>
    <property type="gene ID" value="Pp3c3_4430"/>
</dbReference>
<dbReference type="Gramene" id="Pp3c3_4430V3.1">
    <property type="protein sequence ID" value="Pp3c3_4430V3.1"/>
    <property type="gene ID" value="Pp3c3_4430"/>
</dbReference>
<dbReference type="Gramene" id="Pp3c3_4430V3.2">
    <property type="protein sequence ID" value="Pp3c3_4430V3.2"/>
    <property type="gene ID" value="Pp3c3_4430"/>
</dbReference>
<dbReference type="eggNOG" id="KOG2630">
    <property type="taxonomic scope" value="Eukaryota"/>
</dbReference>
<dbReference type="eggNOG" id="KOG2631">
    <property type="taxonomic scope" value="Eukaryota"/>
</dbReference>
<dbReference type="HOGENOM" id="CLU_023273_3_1_1"/>
<dbReference type="InParanoid" id="A9RBS1"/>
<dbReference type="OMA" id="IPNGCHA"/>
<dbReference type="OrthoDB" id="191080at2759"/>
<dbReference type="UniPathway" id="UPA00904">
    <property type="reaction ID" value="UER00875"/>
</dbReference>
<dbReference type="UniPathway" id="UPA00904">
    <property type="reaction ID" value="UER00876"/>
</dbReference>
<dbReference type="UniPathway" id="UPA00904">
    <property type="reaction ID" value="UER00877"/>
</dbReference>
<dbReference type="Proteomes" id="UP000006727">
    <property type="component" value="Chromosome 3"/>
</dbReference>
<dbReference type="GO" id="GO:0005737">
    <property type="term" value="C:cytoplasm"/>
    <property type="evidence" value="ECO:0000318"/>
    <property type="project" value="GO_Central"/>
</dbReference>
<dbReference type="GO" id="GO:0043874">
    <property type="term" value="F:acireductone synthase activity"/>
    <property type="evidence" value="ECO:0007669"/>
    <property type="project" value="UniProtKB-EC"/>
</dbReference>
<dbReference type="GO" id="GO:0000287">
    <property type="term" value="F:magnesium ion binding"/>
    <property type="evidence" value="ECO:0007669"/>
    <property type="project" value="UniProtKB-UniRule"/>
</dbReference>
<dbReference type="GO" id="GO:0046570">
    <property type="term" value="F:methylthioribulose 1-phosphate dehydratase activity"/>
    <property type="evidence" value="ECO:0000318"/>
    <property type="project" value="GO_Central"/>
</dbReference>
<dbReference type="GO" id="GO:0008270">
    <property type="term" value="F:zinc ion binding"/>
    <property type="evidence" value="ECO:0007669"/>
    <property type="project" value="UniProtKB-UniRule"/>
</dbReference>
<dbReference type="GO" id="GO:0019509">
    <property type="term" value="P:L-methionine salvage from methylthioadenosine"/>
    <property type="evidence" value="ECO:0000318"/>
    <property type="project" value="GO_Central"/>
</dbReference>
<dbReference type="CDD" id="cd01629">
    <property type="entry name" value="HAD_EP"/>
    <property type="match status" value="1"/>
</dbReference>
<dbReference type="FunFam" id="1.10.720.60:FF:000001">
    <property type="entry name" value="Probable bifunctional methylthioribulose-1-phosphate dehydratase/enolase-phosphatase E1"/>
    <property type="match status" value="1"/>
</dbReference>
<dbReference type="FunFam" id="3.40.225.10:FF:000010">
    <property type="entry name" value="Probable bifunctional methylthioribulose-1-phosphate dehydratase/enolase-phosphatase E1"/>
    <property type="match status" value="1"/>
</dbReference>
<dbReference type="Gene3D" id="1.10.720.60">
    <property type="match status" value="1"/>
</dbReference>
<dbReference type="Gene3D" id="3.40.225.10">
    <property type="entry name" value="Class II aldolase/adducin N-terminal domain"/>
    <property type="match status" value="1"/>
</dbReference>
<dbReference type="Gene3D" id="3.40.50.1000">
    <property type="entry name" value="HAD superfamily/HAD-like"/>
    <property type="match status" value="1"/>
</dbReference>
<dbReference type="HAMAP" id="MF_03116">
    <property type="entry name" value="Salvage_MtnB_euk"/>
    <property type="match status" value="1"/>
</dbReference>
<dbReference type="HAMAP" id="MF_03118">
    <property type="entry name" value="Salvage_MtnBC"/>
    <property type="match status" value="1"/>
</dbReference>
<dbReference type="InterPro" id="IPR001303">
    <property type="entry name" value="Aldolase_II/adducin_N"/>
</dbReference>
<dbReference type="InterPro" id="IPR036409">
    <property type="entry name" value="Aldolase_II/adducin_N_sf"/>
</dbReference>
<dbReference type="InterPro" id="IPR023943">
    <property type="entry name" value="Enolase-ppase_E1"/>
</dbReference>
<dbReference type="InterPro" id="IPR036412">
    <property type="entry name" value="HAD-like_sf"/>
</dbReference>
<dbReference type="InterPro" id="IPR023214">
    <property type="entry name" value="HAD_sf"/>
</dbReference>
<dbReference type="InterPro" id="IPR017714">
    <property type="entry name" value="MethylthioRu-1-P_deHdtase_MtnB"/>
</dbReference>
<dbReference type="InterPro" id="IPR027505">
    <property type="entry name" value="MtnB_viridiplantae"/>
</dbReference>
<dbReference type="InterPro" id="IPR027514">
    <property type="entry name" value="Salvage_MtnB_euk"/>
</dbReference>
<dbReference type="NCBIfam" id="TIGR01691">
    <property type="entry name" value="enolase-ppase"/>
    <property type="match status" value="1"/>
</dbReference>
<dbReference type="NCBIfam" id="TIGR03328">
    <property type="entry name" value="salvage_mtnB"/>
    <property type="match status" value="1"/>
</dbReference>
<dbReference type="PANTHER" id="PTHR20371">
    <property type="entry name" value="ENOLASE-PHOSPHATASE E1"/>
    <property type="match status" value="1"/>
</dbReference>
<dbReference type="PANTHER" id="PTHR20371:SF1">
    <property type="entry name" value="ENOLASE-PHOSPHATASE E1"/>
    <property type="match status" value="1"/>
</dbReference>
<dbReference type="Pfam" id="PF00596">
    <property type="entry name" value="Aldolase_II"/>
    <property type="match status" value="1"/>
</dbReference>
<dbReference type="Pfam" id="PF00702">
    <property type="entry name" value="Hydrolase"/>
    <property type="match status" value="1"/>
</dbReference>
<dbReference type="SFLD" id="SFLDF00044">
    <property type="entry name" value="enolase-phosphatase"/>
    <property type="match status" value="1"/>
</dbReference>
<dbReference type="SFLD" id="SFLDS00003">
    <property type="entry name" value="Haloacid_Dehalogenase"/>
    <property type="match status" value="1"/>
</dbReference>
<dbReference type="SMART" id="SM01007">
    <property type="entry name" value="Aldolase_II"/>
    <property type="match status" value="1"/>
</dbReference>
<dbReference type="SUPFAM" id="SSF53639">
    <property type="entry name" value="AraD/HMP-PK domain-like"/>
    <property type="match status" value="1"/>
</dbReference>
<dbReference type="SUPFAM" id="SSF56784">
    <property type="entry name" value="HAD-like"/>
    <property type="match status" value="1"/>
</dbReference>
<name>MTBC_PHYPA</name>
<proteinExistence type="inferred from homology"/>
<keyword id="KW-0028">Amino-acid biosynthesis</keyword>
<keyword id="KW-0378">Hydrolase</keyword>
<keyword id="KW-0456">Lyase</keyword>
<keyword id="KW-0460">Magnesium</keyword>
<keyword id="KW-0479">Metal-binding</keyword>
<keyword id="KW-0486">Methionine biosynthesis</keyword>
<keyword id="KW-0511">Multifunctional enzyme</keyword>
<keyword id="KW-1185">Reference proteome</keyword>
<keyword id="KW-0862">Zinc</keyword>